<protein>
    <recommendedName>
        <fullName evidence="6">SPX domain-containing protein 6</fullName>
    </recommendedName>
    <alternativeName>
        <fullName evidence="6">Protein SPX DOMAIN GENE 6</fullName>
        <shortName evidence="6">OsSPX6</shortName>
    </alternativeName>
</protein>
<gene>
    <name evidence="6" type="primary">SPX6</name>
    <name type="ordered locus">Os07g0614700</name>
    <name type="ORF">OsJ_25123</name>
    <name type="ORF">P0616D06.120</name>
</gene>
<proteinExistence type="evidence at transcript level"/>
<keyword id="KW-1185">Reference proteome</keyword>
<comment type="function">
    <text evidence="1">May be involved in maintaining cellular Pi homeostasis when plants are exposed to an external change in Pi.</text>
</comment>
<comment type="tissue specificity">
    <text evidence="5">Predominantly expressed in roots and leaves.</text>
</comment>
<comment type="induction">
    <text evidence="4">Up-regulated during cold stress.</text>
</comment>
<comment type="sequence caution" evidence="7">
    <conflict type="erroneous gene model prediction">
        <sequence resource="EMBL-CDS" id="BAC16501"/>
    </conflict>
</comment>
<comment type="sequence caution" evidence="7">
    <conflict type="erroneous gene model prediction">
        <sequence resource="EMBL-CDS" id="BAH94025"/>
    </conflict>
</comment>
<comment type="sequence caution" evidence="7">
    <conflict type="erroneous gene model prediction">
        <sequence resource="EMBL-CDS" id="EAZ40652"/>
    </conflict>
</comment>
<organism>
    <name type="scientific">Oryza sativa subsp. japonica</name>
    <name type="common">Rice</name>
    <dbReference type="NCBI Taxonomy" id="39947"/>
    <lineage>
        <taxon>Eukaryota</taxon>
        <taxon>Viridiplantae</taxon>
        <taxon>Streptophyta</taxon>
        <taxon>Embryophyta</taxon>
        <taxon>Tracheophyta</taxon>
        <taxon>Spermatophyta</taxon>
        <taxon>Magnoliopsida</taxon>
        <taxon>Liliopsida</taxon>
        <taxon>Poales</taxon>
        <taxon>Poaceae</taxon>
        <taxon>BOP clade</taxon>
        <taxon>Oryzoideae</taxon>
        <taxon>Oryzeae</taxon>
        <taxon>Oryzinae</taxon>
        <taxon>Oryza</taxon>
        <taxon>Oryza sativa</taxon>
    </lineage>
</organism>
<dbReference type="EMBL" id="KF267998">
    <property type="protein sequence ID" value="AHL42467.2"/>
    <property type="molecule type" value="mRNA"/>
</dbReference>
<dbReference type="EMBL" id="AP005198">
    <property type="protein sequence ID" value="BAC16501.1"/>
    <property type="status" value="ALT_SEQ"/>
    <property type="molecule type" value="Genomic_DNA"/>
</dbReference>
<dbReference type="EMBL" id="AP008213">
    <property type="protein sequence ID" value="BAH94025.1"/>
    <property type="status" value="ALT_SEQ"/>
    <property type="molecule type" value="Genomic_DNA"/>
</dbReference>
<dbReference type="EMBL" id="AP014963">
    <property type="status" value="NOT_ANNOTATED_CDS"/>
    <property type="molecule type" value="Genomic_DNA"/>
</dbReference>
<dbReference type="EMBL" id="CM000144">
    <property type="protein sequence ID" value="EAZ40652.1"/>
    <property type="status" value="ALT_SEQ"/>
    <property type="molecule type" value="Genomic_DNA"/>
</dbReference>
<dbReference type="RefSeq" id="XP_015645554.1">
    <property type="nucleotide sequence ID" value="XM_015790068.1"/>
</dbReference>
<dbReference type="SMR" id="Q8H398"/>
<dbReference type="FunCoup" id="Q8H398">
    <property type="interactions" value="3"/>
</dbReference>
<dbReference type="STRING" id="39947.Q8H398"/>
<dbReference type="PaxDb" id="39947-Q8H398"/>
<dbReference type="EnsemblPlants" id="Os07t0614700-02">
    <property type="protein sequence ID" value="Os07t0614700-02"/>
    <property type="gene ID" value="Os07g0614700"/>
</dbReference>
<dbReference type="Gramene" id="Os07t0614700-02">
    <property type="protein sequence ID" value="Os07t0614700-02"/>
    <property type="gene ID" value="Os07g0614700"/>
</dbReference>
<dbReference type="KEGG" id="dosa:Os07g0614700"/>
<dbReference type="eggNOG" id="KOG1161">
    <property type="taxonomic scope" value="Eukaryota"/>
</dbReference>
<dbReference type="InParanoid" id="Q8H398"/>
<dbReference type="OrthoDB" id="6493944at2759"/>
<dbReference type="Proteomes" id="UP000000763">
    <property type="component" value="Chromosome 7"/>
</dbReference>
<dbReference type="Proteomes" id="UP000007752">
    <property type="component" value="Chromosome 7"/>
</dbReference>
<dbReference type="Proteomes" id="UP000059680">
    <property type="component" value="Chromosome 7"/>
</dbReference>
<dbReference type="ExpressionAtlas" id="Q8H398">
    <property type="expression patterns" value="baseline and differential"/>
</dbReference>
<dbReference type="GO" id="GO:0070417">
    <property type="term" value="P:cellular response to cold"/>
    <property type="evidence" value="ECO:0000270"/>
    <property type="project" value="UniProtKB"/>
</dbReference>
<dbReference type="GO" id="GO:0016036">
    <property type="term" value="P:cellular response to phosphate starvation"/>
    <property type="evidence" value="ECO:0007669"/>
    <property type="project" value="InterPro"/>
</dbReference>
<dbReference type="CDD" id="cd14481">
    <property type="entry name" value="SPX_AtSPX1_like"/>
    <property type="match status" value="1"/>
</dbReference>
<dbReference type="InterPro" id="IPR004331">
    <property type="entry name" value="SPX_dom"/>
</dbReference>
<dbReference type="InterPro" id="IPR031142">
    <property type="entry name" value="SPX_prot"/>
</dbReference>
<dbReference type="PANTHER" id="PTHR45978">
    <property type="entry name" value="SPX DOMAIN-CONTAINING PROTEIN 3"/>
    <property type="match status" value="1"/>
</dbReference>
<dbReference type="PANTHER" id="PTHR45978:SF4">
    <property type="entry name" value="SPX DOMAIN-CONTAINING PROTEIN 6"/>
    <property type="match status" value="1"/>
</dbReference>
<dbReference type="Pfam" id="PF03105">
    <property type="entry name" value="SPX"/>
    <property type="match status" value="2"/>
</dbReference>
<dbReference type="PROSITE" id="PS51382">
    <property type="entry name" value="SPX"/>
    <property type="match status" value="1"/>
</dbReference>
<accession>Q8H398</accession>
<accession>C7J4Z2</accession>
<accession>W8QDN4</accession>
<sequence>MKFGKLLKRQIEQSLPEWRDKFVSYKELKRIVASISGSPADEAAFVAALAADIDKIDSFFLEQEEEFVIRHRELQEAIKKAAEAAAEVAGIRREIVDFHGEMVLLLSYSSINYIGVGKILKKHDKRTGGALAAPVAEAVRERRHFFKTETVSRMVRECEAMMAEAAVLPAEAAPEALAAAAEHGIFRNTVAALLTMEDVRRGSSTHGRHSLPPLTLPDSDWLRSFQPPSPIPIQ</sequence>
<evidence type="ECO:0000250" key="1">
    <source>
        <dbReference type="UniProtKB" id="Q7Y0F6"/>
    </source>
</evidence>
<evidence type="ECO:0000255" key="2">
    <source>
        <dbReference type="PROSITE-ProRule" id="PRU00714"/>
    </source>
</evidence>
<evidence type="ECO:0000256" key="3">
    <source>
        <dbReference type="SAM" id="MobiDB-lite"/>
    </source>
</evidence>
<evidence type="ECO:0000269" key="4">
    <source>
    </source>
</evidence>
<evidence type="ECO:0000269" key="5">
    <source>
    </source>
</evidence>
<evidence type="ECO:0000303" key="6">
    <source>
    </source>
</evidence>
<evidence type="ECO:0000305" key="7"/>
<name>SPX6_ORYSJ</name>
<reference key="1">
    <citation type="journal article" date="2014" name="J. Exp. Bot.">
        <title>The paralogous SPX3 and SPX5 genes redundantly modulate Pi homeostasis in rice.</title>
        <authorList>
            <person name="Shi J."/>
            <person name="Hu H."/>
            <person name="Zhang K."/>
            <person name="Zhang W."/>
            <person name="Yu Y."/>
            <person name="Wu Z."/>
            <person name="Wu P."/>
        </authorList>
    </citation>
    <scope>NUCLEOTIDE SEQUENCE [MRNA]</scope>
</reference>
<reference key="2">
    <citation type="journal article" date="2005" name="Nature">
        <title>The map-based sequence of the rice genome.</title>
        <authorList>
            <consortium name="International rice genome sequencing project (IRGSP)"/>
        </authorList>
    </citation>
    <scope>NUCLEOTIDE SEQUENCE [LARGE SCALE GENOMIC DNA]</scope>
    <source>
        <strain>cv. Nipponbare</strain>
    </source>
</reference>
<reference key="3">
    <citation type="journal article" date="2008" name="Nucleic Acids Res.">
        <title>The rice annotation project database (RAP-DB): 2008 update.</title>
        <authorList>
            <consortium name="The rice annotation project (RAP)"/>
        </authorList>
    </citation>
    <scope>GENOME REANNOTATION</scope>
    <source>
        <strain>cv. Nipponbare</strain>
    </source>
</reference>
<reference key="4">
    <citation type="journal article" date="2013" name="Rice">
        <title>Improvement of the Oryza sativa Nipponbare reference genome using next generation sequence and optical map data.</title>
        <authorList>
            <person name="Kawahara Y."/>
            <person name="de la Bastide M."/>
            <person name="Hamilton J.P."/>
            <person name="Kanamori H."/>
            <person name="McCombie W.R."/>
            <person name="Ouyang S."/>
            <person name="Schwartz D.C."/>
            <person name="Tanaka T."/>
            <person name="Wu J."/>
            <person name="Zhou S."/>
            <person name="Childs K.L."/>
            <person name="Davidson R.M."/>
            <person name="Lin H."/>
            <person name="Quesada-Ocampo L."/>
            <person name="Vaillancourt B."/>
            <person name="Sakai H."/>
            <person name="Lee S.S."/>
            <person name="Kim J."/>
            <person name="Numa H."/>
            <person name="Itoh T."/>
            <person name="Buell C.R."/>
            <person name="Matsumoto T."/>
        </authorList>
    </citation>
    <scope>GENOME REANNOTATION</scope>
    <source>
        <strain>cv. Nipponbare</strain>
    </source>
</reference>
<reference key="5">
    <citation type="journal article" date="2005" name="PLoS Biol.">
        <title>The genomes of Oryza sativa: a history of duplications.</title>
        <authorList>
            <person name="Yu J."/>
            <person name="Wang J."/>
            <person name="Lin W."/>
            <person name="Li S."/>
            <person name="Li H."/>
            <person name="Zhou J."/>
            <person name="Ni P."/>
            <person name="Dong W."/>
            <person name="Hu S."/>
            <person name="Zeng C."/>
            <person name="Zhang J."/>
            <person name="Zhang Y."/>
            <person name="Li R."/>
            <person name="Xu Z."/>
            <person name="Li S."/>
            <person name="Li X."/>
            <person name="Zheng H."/>
            <person name="Cong L."/>
            <person name="Lin L."/>
            <person name="Yin J."/>
            <person name="Geng J."/>
            <person name="Li G."/>
            <person name="Shi J."/>
            <person name="Liu J."/>
            <person name="Lv H."/>
            <person name="Li J."/>
            <person name="Wang J."/>
            <person name="Deng Y."/>
            <person name="Ran L."/>
            <person name="Shi X."/>
            <person name="Wang X."/>
            <person name="Wu Q."/>
            <person name="Li C."/>
            <person name="Ren X."/>
            <person name="Wang J."/>
            <person name="Wang X."/>
            <person name="Li D."/>
            <person name="Liu D."/>
            <person name="Zhang X."/>
            <person name="Ji Z."/>
            <person name="Zhao W."/>
            <person name="Sun Y."/>
            <person name="Zhang Z."/>
            <person name="Bao J."/>
            <person name="Han Y."/>
            <person name="Dong L."/>
            <person name="Ji J."/>
            <person name="Chen P."/>
            <person name="Wu S."/>
            <person name="Liu J."/>
            <person name="Xiao Y."/>
            <person name="Bu D."/>
            <person name="Tan J."/>
            <person name="Yang L."/>
            <person name="Ye C."/>
            <person name="Zhang J."/>
            <person name="Xu J."/>
            <person name="Zhou Y."/>
            <person name="Yu Y."/>
            <person name="Zhang B."/>
            <person name="Zhuang S."/>
            <person name="Wei H."/>
            <person name="Liu B."/>
            <person name="Lei M."/>
            <person name="Yu H."/>
            <person name="Li Y."/>
            <person name="Xu H."/>
            <person name="Wei S."/>
            <person name="He X."/>
            <person name="Fang L."/>
            <person name="Zhang Z."/>
            <person name="Zhang Y."/>
            <person name="Huang X."/>
            <person name="Su Z."/>
            <person name="Tong W."/>
            <person name="Li J."/>
            <person name="Tong Z."/>
            <person name="Li S."/>
            <person name="Ye J."/>
            <person name="Wang L."/>
            <person name="Fang L."/>
            <person name="Lei T."/>
            <person name="Chen C.-S."/>
            <person name="Chen H.-C."/>
            <person name="Xu Z."/>
            <person name="Li H."/>
            <person name="Huang H."/>
            <person name="Zhang F."/>
            <person name="Xu H."/>
            <person name="Li N."/>
            <person name="Zhao C."/>
            <person name="Li S."/>
            <person name="Dong L."/>
            <person name="Huang Y."/>
            <person name="Li L."/>
            <person name="Xi Y."/>
            <person name="Qi Q."/>
            <person name="Li W."/>
            <person name="Zhang B."/>
            <person name="Hu W."/>
            <person name="Zhang Y."/>
            <person name="Tian X."/>
            <person name="Jiao Y."/>
            <person name="Liang X."/>
            <person name="Jin J."/>
            <person name="Gao L."/>
            <person name="Zheng W."/>
            <person name="Hao B."/>
            <person name="Liu S.-M."/>
            <person name="Wang W."/>
            <person name="Yuan L."/>
            <person name="Cao M."/>
            <person name="McDermott J."/>
            <person name="Samudrala R."/>
            <person name="Wang J."/>
            <person name="Wong G.K.-S."/>
            <person name="Yang H."/>
        </authorList>
    </citation>
    <scope>NUCLEOTIDE SEQUENCE [LARGE SCALE GENOMIC DNA]</scope>
    <source>
        <strain>cv. Nipponbare</strain>
    </source>
</reference>
<reference key="6">
    <citation type="journal article" date="2009" name="J. Integr. Plant Biol.">
        <title>Regulation of OsSPX1 and OsSPX3 on expression of OsSPX domain genes and Pi-starvation signaling in rice.</title>
        <authorList>
            <person name="Wang Z."/>
            <person name="Hu H."/>
            <person name="Huang H."/>
            <person name="Duan K."/>
            <person name="Wu Z."/>
            <person name="Wu P."/>
        </authorList>
    </citation>
    <scope>TISSUE SPECIFICITY</scope>
</reference>
<reference key="7">
    <citation type="journal article" date="2009" name="Plant Biotechnol. J.">
        <title>Increased expression of OsSPX1 enhances cold/subfreezing tolerance in tobacco and Arabidopsis thaliana.</title>
        <authorList>
            <person name="Zhao L."/>
            <person name="Liu F."/>
            <person name="Xu W."/>
            <person name="Di C."/>
            <person name="Zhou S."/>
            <person name="Xue Y."/>
            <person name="Yu J."/>
            <person name="Su Z."/>
        </authorList>
    </citation>
    <scope>GENE FAMILY</scope>
    <scope>NOMENCLATURE</scope>
    <scope>INDUCTION BY COLD</scope>
</reference>
<feature type="chain" id="PRO_0000398357" description="SPX domain-containing protein 6">
    <location>
        <begin position="1"/>
        <end position="234"/>
    </location>
</feature>
<feature type="domain" description="SPX" evidence="2">
    <location>
        <begin position="1"/>
        <end position="137"/>
    </location>
</feature>
<feature type="region of interest" description="Disordered" evidence="3">
    <location>
        <begin position="202"/>
        <end position="234"/>
    </location>
</feature>